<gene>
    <name type="primary">P26</name>
    <name type="ORF">ORF132</name>
</gene>
<protein>
    <recommendedName>
        <fullName evidence="1">Poxin</fullName>
        <ecNumber evidence="1">3.1.-.-</ecNumber>
    </recommendedName>
</protein>
<feature type="chain" id="PRO_0000132895" description="Poxin">
    <location>
        <begin position="1"/>
        <end position="230"/>
    </location>
</feature>
<feature type="active site" description="Proton donor" evidence="1">
    <location>
        <position position="43"/>
    </location>
</feature>
<feature type="active site" description="Shared with catalytic histidine of dimeric partner" evidence="1">
    <location>
        <position position="174"/>
    </location>
</feature>
<feature type="active site" description="Proton acceptor; shared with catalytic histidine of dimeric partner" evidence="1">
    <location>
        <position position="178"/>
    </location>
</feature>
<feature type="site" description="Substrate binding" evidence="1">
    <location>
        <position position="88"/>
    </location>
</feature>
<feature type="site" description="Substrate binding" evidence="1">
    <location>
        <position position="219"/>
    </location>
</feature>
<name>POXIN_NPVOP</name>
<keyword id="KW-0378">Hydrolase</keyword>
<keyword id="KW-0540">Nuclease</keyword>
<keyword id="KW-1185">Reference proteome</keyword>
<organism>
    <name type="scientific">Orgyia pseudotsugata multicapsid polyhedrosis virus</name>
    <name type="common">OpMNPV</name>
    <dbReference type="NCBI Taxonomy" id="262177"/>
    <lineage>
        <taxon>Viruses</taxon>
        <taxon>Viruses incertae sedis</taxon>
        <taxon>Naldaviricetes</taxon>
        <taxon>Lefavirales</taxon>
        <taxon>Baculoviridae</taxon>
        <taxon>Alphabaculovirus</taxon>
        <taxon>Alphabaculovirus orpseudotsugatae</taxon>
    </lineage>
</organism>
<proteinExistence type="inferred from homology"/>
<organismHost>
    <name type="scientific">Orgyia pseudotsugata</name>
    <name type="common">Douglas-fir tussock moth</name>
    <dbReference type="NCBI Taxonomy" id="33414"/>
</organismHost>
<sequence>MYIKMEVEFDEDTGALQIGGQEVFVMVFEPGQEVFDKSLDQHHQFPGVATSVVFPQLSIGTKVDVFTSSGGFGATDHHCFNYHVCNKRFVFGSVPALEIPADVREHLRIGAPITCADRLVSLVTAVHAADGAWLLRVTAARAGQVSGHARQQRRGAGRTVRAGRSVYGPVQLPYEQLKAHAFRKRRPRRDAAESCALFYNDSEVRITFNKGEFELMHWRLPGPLVSHGFK</sequence>
<evidence type="ECO:0000255" key="1">
    <source>
        <dbReference type="HAMAP-Rule" id="MF_04143"/>
    </source>
</evidence>
<accession>P11037</accession>
<reference key="1">
    <citation type="journal article" date="1987" name="Virology">
        <title>Comparison of the p26 gene region of two baculoviruses.</title>
        <authorList>
            <person name="Bicknell J.N."/>
            <person name="Leisy D.J."/>
            <person name="Rohrmann G.F."/>
            <person name="Beaudreau G.S."/>
        </authorList>
    </citation>
    <scope>NUCLEOTIDE SEQUENCE [GENOMIC DNA]</scope>
</reference>
<reference key="2">
    <citation type="journal article" date="1997" name="Virology">
        <title>The sequence of the Orgyia pseudotsugata multinucleocapsid nuclear polyhedrosis virus genome.</title>
        <authorList>
            <person name="Ahrens C.H."/>
            <person name="Russell R.R."/>
            <person name="Funk C.J."/>
            <person name="Evans J."/>
            <person name="Harwood S."/>
            <person name="Rohrmann G.F."/>
        </authorList>
    </citation>
    <scope>NUCLEOTIDE SEQUENCE [LARGE SCALE GENOMIC DNA]</scope>
</reference>
<reference key="3">
    <citation type="journal article" date="1989" name="J. Gen. Virol.">
        <title>Characterization of the genetic organization of the HindIII M region of the multicapsid nuclear polyhedrosis virus of Orgyia pseudotsugata reveals major differences among baculoviruses.</title>
        <authorList>
            <person name="Gombart A.F."/>
            <person name="Blissard G.W."/>
            <person name="Rohrmann G.F."/>
        </authorList>
    </citation>
    <scope>NUCLEOTIDE SEQUENCE [GENOMIC DNA] OF 1-38</scope>
</reference>
<comment type="function">
    <text evidence="1">Nuclease that cleaves host 2',3'-cGAMP.</text>
</comment>
<comment type="catalytic activity">
    <reaction evidence="1">
        <text>2',3'-cGAMP + H2O = Gp(2'-5')Ap(3') + H(+)</text>
        <dbReference type="Rhea" id="RHEA:59472"/>
        <dbReference type="ChEBI" id="CHEBI:15377"/>
        <dbReference type="ChEBI" id="CHEBI:15378"/>
        <dbReference type="ChEBI" id="CHEBI:143093"/>
        <dbReference type="ChEBI" id="CHEBI:143098"/>
    </reaction>
    <physiologicalReaction direction="left-to-right" evidence="1">
        <dbReference type="Rhea" id="RHEA:59473"/>
    </physiologicalReaction>
</comment>
<comment type="subunit">
    <text evidence="1">Homodimer.</text>
</comment>
<comment type="domain">
    <text evidence="1">The substrate binding site is formed by the N-terminus of a monomer and the C-terminus of the opposite monomer.</text>
</comment>
<comment type="similarity">
    <text evidence="1">Belongs to the poxin family.</text>
</comment>
<dbReference type="EC" id="3.1.-.-" evidence="1"/>
<dbReference type="EMBL" id="M18367">
    <property type="protein sequence ID" value="AAA46727.1"/>
    <property type="molecule type" value="Genomic_DNA"/>
</dbReference>
<dbReference type="EMBL" id="U75930">
    <property type="protein sequence ID" value="AAC59131.1"/>
    <property type="molecule type" value="Genomic_DNA"/>
</dbReference>
<dbReference type="EMBL" id="D13929">
    <property type="protein sequence ID" value="BAA03032.1"/>
    <property type="molecule type" value="Genomic_DNA"/>
</dbReference>
<dbReference type="PIR" id="A27405">
    <property type="entry name" value="WMNV26"/>
</dbReference>
<dbReference type="RefSeq" id="NP_046288.1">
    <property type="nucleotide sequence ID" value="NC_001875.2"/>
</dbReference>
<dbReference type="SMR" id="P11037"/>
<dbReference type="KEGG" id="vg:912076"/>
<dbReference type="OrthoDB" id="7755at10239"/>
<dbReference type="Proteomes" id="UP000009248">
    <property type="component" value="Genome"/>
</dbReference>
<dbReference type="GO" id="GO:0061507">
    <property type="term" value="F:2',3'-cyclic GMP-AMP binding"/>
    <property type="evidence" value="ECO:0007669"/>
    <property type="project" value="UniProtKB-UniRule"/>
</dbReference>
<dbReference type="GO" id="GO:0004518">
    <property type="term" value="F:nuclease activity"/>
    <property type="evidence" value="ECO:0007669"/>
    <property type="project" value="UniProtKB-UniRule"/>
</dbReference>
<dbReference type="HAMAP" id="MF_04143">
    <property type="entry name" value="Poxins"/>
    <property type="match status" value="1"/>
</dbReference>
<dbReference type="InterPro" id="IPR006853">
    <property type="entry name" value="Poxin_vir"/>
</dbReference>
<dbReference type="Pfam" id="PF04766">
    <property type="entry name" value="Baculo_p26"/>
    <property type="match status" value="1"/>
</dbReference>